<keyword id="KW-0963">Cytoplasm</keyword>
<keyword id="KW-0275">Fatty acid biosynthesis</keyword>
<keyword id="KW-0276">Fatty acid metabolism</keyword>
<keyword id="KW-0444">Lipid biosynthesis</keyword>
<keyword id="KW-0443">Lipid metabolism</keyword>
<keyword id="KW-0460">Magnesium</keyword>
<keyword id="KW-0479">Metal-binding</keyword>
<keyword id="KW-0808">Transferase</keyword>
<comment type="function">
    <text evidence="1">Transfers the 4'-phosphopantetheine moiety from coenzyme A to a Ser of acyl-carrier-protein.</text>
</comment>
<comment type="catalytic activity">
    <reaction evidence="1">
        <text>apo-[ACP] + CoA = holo-[ACP] + adenosine 3',5'-bisphosphate + H(+)</text>
        <dbReference type="Rhea" id="RHEA:12068"/>
        <dbReference type="Rhea" id="RHEA-COMP:9685"/>
        <dbReference type="Rhea" id="RHEA-COMP:9690"/>
        <dbReference type="ChEBI" id="CHEBI:15378"/>
        <dbReference type="ChEBI" id="CHEBI:29999"/>
        <dbReference type="ChEBI" id="CHEBI:57287"/>
        <dbReference type="ChEBI" id="CHEBI:58343"/>
        <dbReference type="ChEBI" id="CHEBI:64479"/>
        <dbReference type="EC" id="2.7.8.7"/>
    </reaction>
</comment>
<comment type="cofactor">
    <cofactor evidence="1">
        <name>Mg(2+)</name>
        <dbReference type="ChEBI" id="CHEBI:18420"/>
    </cofactor>
</comment>
<comment type="subcellular location">
    <subcellularLocation>
        <location evidence="1">Cytoplasm</location>
    </subcellularLocation>
</comment>
<comment type="similarity">
    <text evidence="1">Belongs to the P-Pant transferase superfamily. AcpS family.</text>
</comment>
<organism>
    <name type="scientific">Escherichia coli (strain UTI89 / UPEC)</name>
    <dbReference type="NCBI Taxonomy" id="364106"/>
    <lineage>
        <taxon>Bacteria</taxon>
        <taxon>Pseudomonadati</taxon>
        <taxon>Pseudomonadota</taxon>
        <taxon>Gammaproteobacteria</taxon>
        <taxon>Enterobacterales</taxon>
        <taxon>Enterobacteriaceae</taxon>
        <taxon>Escherichia</taxon>
    </lineage>
</organism>
<accession>Q1R8H0</accession>
<name>ACPS_ECOUT</name>
<gene>
    <name evidence="1" type="primary">acpS</name>
    <name type="ordered locus">UTI89_C2884</name>
</gene>
<feature type="chain" id="PRO_1000008422" description="Holo-[acyl-carrier-protein] synthase">
    <location>
        <begin position="1"/>
        <end position="126"/>
    </location>
</feature>
<feature type="binding site" evidence="1">
    <location>
        <position position="9"/>
    </location>
    <ligand>
        <name>Mg(2+)</name>
        <dbReference type="ChEBI" id="CHEBI:18420"/>
    </ligand>
</feature>
<feature type="binding site" evidence="1">
    <location>
        <position position="58"/>
    </location>
    <ligand>
        <name>Mg(2+)</name>
        <dbReference type="ChEBI" id="CHEBI:18420"/>
    </ligand>
</feature>
<reference key="1">
    <citation type="journal article" date="2006" name="Proc. Natl. Acad. Sci. U.S.A.">
        <title>Identification of genes subject to positive selection in uropathogenic strains of Escherichia coli: a comparative genomics approach.</title>
        <authorList>
            <person name="Chen S.L."/>
            <person name="Hung C.-S."/>
            <person name="Xu J."/>
            <person name="Reigstad C.S."/>
            <person name="Magrini V."/>
            <person name="Sabo A."/>
            <person name="Blasiar D."/>
            <person name="Bieri T."/>
            <person name="Meyer R.R."/>
            <person name="Ozersky P."/>
            <person name="Armstrong J.R."/>
            <person name="Fulton R.S."/>
            <person name="Latreille J.P."/>
            <person name="Spieth J."/>
            <person name="Hooton T.M."/>
            <person name="Mardis E.R."/>
            <person name="Hultgren S.J."/>
            <person name="Gordon J.I."/>
        </authorList>
    </citation>
    <scope>NUCLEOTIDE SEQUENCE [LARGE SCALE GENOMIC DNA]</scope>
    <source>
        <strain>UTI89 / UPEC</strain>
    </source>
</reference>
<evidence type="ECO:0000255" key="1">
    <source>
        <dbReference type="HAMAP-Rule" id="MF_00101"/>
    </source>
</evidence>
<protein>
    <recommendedName>
        <fullName evidence="1">Holo-[acyl-carrier-protein] synthase</fullName>
        <shortName evidence="1">Holo-ACP synthase</shortName>
        <ecNumber evidence="1">2.7.8.7</ecNumber>
    </recommendedName>
    <alternativeName>
        <fullName evidence="1">4'-phosphopantetheinyl transferase AcpS</fullName>
    </alternativeName>
</protein>
<proteinExistence type="inferred from homology"/>
<sequence>MAILGLGTDIVEIARIEAVIARSGERLARRVLSDNEWEIWKTHHQPVRFLAKRFAVKEAAAKAFGTGIRNGLAFNQFEVFNDELGKPRLRLWGEALKLAEKLGVVNMHVTLADERHYACATVIIES</sequence>
<dbReference type="EC" id="2.7.8.7" evidence="1"/>
<dbReference type="EMBL" id="CP000243">
    <property type="protein sequence ID" value="ABE08344.1"/>
    <property type="molecule type" value="Genomic_DNA"/>
</dbReference>
<dbReference type="RefSeq" id="WP_000986038.1">
    <property type="nucleotide sequence ID" value="NZ_CP064825.1"/>
</dbReference>
<dbReference type="SMR" id="Q1R8H0"/>
<dbReference type="KEGG" id="eci:UTI89_C2884"/>
<dbReference type="HOGENOM" id="CLU_089696_3_1_6"/>
<dbReference type="Proteomes" id="UP000001952">
    <property type="component" value="Chromosome"/>
</dbReference>
<dbReference type="GO" id="GO:0005737">
    <property type="term" value="C:cytoplasm"/>
    <property type="evidence" value="ECO:0007669"/>
    <property type="project" value="UniProtKB-SubCell"/>
</dbReference>
<dbReference type="GO" id="GO:0008897">
    <property type="term" value="F:holo-[acyl-carrier-protein] synthase activity"/>
    <property type="evidence" value="ECO:0007669"/>
    <property type="project" value="UniProtKB-UniRule"/>
</dbReference>
<dbReference type="GO" id="GO:0000287">
    <property type="term" value="F:magnesium ion binding"/>
    <property type="evidence" value="ECO:0007669"/>
    <property type="project" value="UniProtKB-UniRule"/>
</dbReference>
<dbReference type="GO" id="GO:0006633">
    <property type="term" value="P:fatty acid biosynthetic process"/>
    <property type="evidence" value="ECO:0007669"/>
    <property type="project" value="UniProtKB-UniRule"/>
</dbReference>
<dbReference type="FunFam" id="3.90.470.20:FF:000001">
    <property type="entry name" value="Holo-[acyl-carrier-protein] synthase"/>
    <property type="match status" value="1"/>
</dbReference>
<dbReference type="Gene3D" id="3.90.470.20">
    <property type="entry name" value="4'-phosphopantetheinyl transferase domain"/>
    <property type="match status" value="1"/>
</dbReference>
<dbReference type="HAMAP" id="MF_00101">
    <property type="entry name" value="AcpS"/>
    <property type="match status" value="1"/>
</dbReference>
<dbReference type="InterPro" id="IPR008278">
    <property type="entry name" value="4-PPantetheinyl_Trfase_dom"/>
</dbReference>
<dbReference type="InterPro" id="IPR037143">
    <property type="entry name" value="4-PPantetheinyl_Trfase_dom_sf"/>
</dbReference>
<dbReference type="InterPro" id="IPR002582">
    <property type="entry name" value="ACPS"/>
</dbReference>
<dbReference type="InterPro" id="IPR004568">
    <property type="entry name" value="Ppantetheine-prot_Trfase_dom"/>
</dbReference>
<dbReference type="NCBIfam" id="TIGR00516">
    <property type="entry name" value="acpS"/>
    <property type="match status" value="1"/>
</dbReference>
<dbReference type="NCBIfam" id="TIGR00556">
    <property type="entry name" value="pantethn_trn"/>
    <property type="match status" value="1"/>
</dbReference>
<dbReference type="Pfam" id="PF01648">
    <property type="entry name" value="ACPS"/>
    <property type="match status" value="1"/>
</dbReference>
<dbReference type="SUPFAM" id="SSF56214">
    <property type="entry name" value="4'-phosphopantetheinyl transferase"/>
    <property type="match status" value="1"/>
</dbReference>